<comment type="subcellular location">
    <subcellularLocation>
        <location evidence="1">Mitochondrion membrane</location>
        <topology evidence="1">Single-pass membrane protein</topology>
    </subcellularLocation>
</comment>
<comment type="similarity">
    <text evidence="3">Belongs to the AIM36 family.</text>
</comment>
<accession>Q759J5</accession>
<feature type="transit peptide" description="Mitochondrion" evidence="2">
    <location>
        <begin position="1"/>
        <end position="23"/>
    </location>
</feature>
<feature type="chain" id="PRO_0000399718" description="Altered inheritance of mitochondria protein 36, mitochondrial">
    <location>
        <begin position="24"/>
        <end position="221"/>
    </location>
</feature>
<feature type="transmembrane region" description="Helical" evidence="2">
    <location>
        <begin position="36"/>
        <end position="54"/>
    </location>
</feature>
<sequence length="221" mass="24663">MFRRLVTPRLLRLRRQQGLSRPYASKAPGSEDLPSAWKMVGVAVVSTLIFVQAAKSIDRSKPQTEFSEAEFEKVRSGLRRRVTVFKPDELEVLAVLADVPVEKIRAPAGARAVRVQQALERFRTDEHDKYHALLEELHAVHGDDYSAHLPKGALVALMGRYLKEVCQAGDSVVLLGFPRNMQEAIQFESEVAVISALVAPQGSEESQLVQYFKTVNKVITV</sequence>
<dbReference type="EMBL" id="AE016817">
    <property type="protein sequence ID" value="AAS52202.1"/>
    <property type="molecule type" value="Genomic_DNA"/>
</dbReference>
<dbReference type="RefSeq" id="NP_984378.1">
    <property type="nucleotide sequence ID" value="NM_209731.1"/>
</dbReference>
<dbReference type="SMR" id="Q759J5"/>
<dbReference type="FunCoup" id="Q759J5">
    <property type="interactions" value="26"/>
</dbReference>
<dbReference type="EnsemblFungi" id="AAS52202">
    <property type="protein sequence ID" value="AAS52202"/>
    <property type="gene ID" value="AGOS_ADR282C"/>
</dbReference>
<dbReference type="GeneID" id="4620540"/>
<dbReference type="KEGG" id="ago:AGOS_ADR282C"/>
<dbReference type="eggNOG" id="ENOG502S2G9">
    <property type="taxonomic scope" value="Eukaryota"/>
</dbReference>
<dbReference type="HOGENOM" id="CLU_090420_0_0_1"/>
<dbReference type="InParanoid" id="Q759J5"/>
<dbReference type="OMA" id="RVAIFPQ"/>
<dbReference type="OrthoDB" id="4081130at2759"/>
<dbReference type="Proteomes" id="UP000000591">
    <property type="component" value="Chromosome IV"/>
</dbReference>
<dbReference type="GO" id="GO:0031966">
    <property type="term" value="C:mitochondrial membrane"/>
    <property type="evidence" value="ECO:0007669"/>
    <property type="project" value="UniProtKB-SubCell"/>
</dbReference>
<name>AIM36_EREGS</name>
<protein>
    <recommendedName>
        <fullName>Altered inheritance of mitochondria protein 36, mitochondrial</fullName>
    </recommendedName>
    <alternativeName>
        <fullName>Found in mitochondria protein 39</fullName>
    </alternativeName>
</protein>
<reference key="1">
    <citation type="journal article" date="2004" name="Science">
        <title>The Ashbya gossypii genome as a tool for mapping the ancient Saccharomyces cerevisiae genome.</title>
        <authorList>
            <person name="Dietrich F.S."/>
            <person name="Voegeli S."/>
            <person name="Brachat S."/>
            <person name="Lerch A."/>
            <person name="Gates K."/>
            <person name="Steiner S."/>
            <person name="Mohr C."/>
            <person name="Poehlmann R."/>
            <person name="Luedi P."/>
            <person name="Choi S."/>
            <person name="Wing R.A."/>
            <person name="Flavier A."/>
            <person name="Gaffney T.D."/>
            <person name="Philippsen P."/>
        </authorList>
    </citation>
    <scope>NUCLEOTIDE SEQUENCE [LARGE SCALE GENOMIC DNA]</scope>
    <source>
        <strain>ATCC 10895 / CBS 109.51 / FGSC 9923 / NRRL Y-1056</strain>
    </source>
</reference>
<reference key="2">
    <citation type="journal article" date="2013" name="G3 (Bethesda)">
        <title>Genomes of Ashbya fungi isolated from insects reveal four mating-type loci, numerous translocations, lack of transposons, and distinct gene duplications.</title>
        <authorList>
            <person name="Dietrich F.S."/>
            <person name="Voegeli S."/>
            <person name="Kuo S."/>
            <person name="Philippsen P."/>
        </authorList>
    </citation>
    <scope>GENOME REANNOTATION</scope>
    <source>
        <strain>ATCC 10895 / CBS 109.51 / FGSC 9923 / NRRL Y-1056</strain>
    </source>
</reference>
<proteinExistence type="inferred from homology"/>
<organism>
    <name type="scientific">Eremothecium gossypii (strain ATCC 10895 / CBS 109.51 / FGSC 9923 / NRRL Y-1056)</name>
    <name type="common">Yeast</name>
    <name type="synonym">Ashbya gossypii</name>
    <dbReference type="NCBI Taxonomy" id="284811"/>
    <lineage>
        <taxon>Eukaryota</taxon>
        <taxon>Fungi</taxon>
        <taxon>Dikarya</taxon>
        <taxon>Ascomycota</taxon>
        <taxon>Saccharomycotina</taxon>
        <taxon>Saccharomycetes</taxon>
        <taxon>Saccharomycetales</taxon>
        <taxon>Saccharomycetaceae</taxon>
        <taxon>Eremothecium</taxon>
    </lineage>
</organism>
<keyword id="KW-0472">Membrane</keyword>
<keyword id="KW-0496">Mitochondrion</keyword>
<keyword id="KW-1185">Reference proteome</keyword>
<keyword id="KW-0809">Transit peptide</keyword>
<keyword id="KW-0812">Transmembrane</keyword>
<keyword id="KW-1133">Transmembrane helix</keyword>
<gene>
    <name type="primary">AIM36</name>
    <name type="synonym">FMP39</name>
    <name type="ordered locus">ADR282C</name>
</gene>
<evidence type="ECO:0000250" key="1"/>
<evidence type="ECO:0000255" key="2"/>
<evidence type="ECO:0000305" key="3"/>